<accession>C0PWD6</accession>
<organism>
    <name type="scientific">Salmonella paratyphi C (strain RKS4594)</name>
    <dbReference type="NCBI Taxonomy" id="476213"/>
    <lineage>
        <taxon>Bacteria</taxon>
        <taxon>Pseudomonadati</taxon>
        <taxon>Pseudomonadota</taxon>
        <taxon>Gammaproteobacteria</taxon>
        <taxon>Enterobacterales</taxon>
        <taxon>Enterobacteriaceae</taxon>
        <taxon>Salmonella</taxon>
    </lineage>
</organism>
<proteinExistence type="inferred from homology"/>
<evidence type="ECO:0000255" key="1">
    <source>
        <dbReference type="HAMAP-Rule" id="MF_00691"/>
    </source>
</evidence>
<protein>
    <recommendedName>
        <fullName evidence="1">5-oxoprolinase subunit A</fullName>
        <shortName evidence="1">5-OPase subunit A</shortName>
        <ecNumber evidence="1">3.5.2.9</ecNumber>
    </recommendedName>
    <alternativeName>
        <fullName evidence="1">5-oxoprolinase (ATP-hydrolyzing) subunit A</fullName>
    </alternativeName>
</protein>
<keyword id="KW-0067">ATP-binding</keyword>
<keyword id="KW-0378">Hydrolase</keyword>
<keyword id="KW-0547">Nucleotide-binding</keyword>
<gene>
    <name evidence="1" type="primary">pxpA</name>
    <name type="ordered locus">SPC_0724</name>
</gene>
<name>PXPA_SALPC</name>
<feature type="chain" id="PRO_1000200463" description="5-oxoprolinase subunit A">
    <location>
        <begin position="1"/>
        <end position="244"/>
    </location>
</feature>
<reference key="1">
    <citation type="journal article" date="2009" name="PLoS ONE">
        <title>Salmonella paratyphi C: genetic divergence from Salmonella choleraesuis and pathogenic convergence with Salmonella typhi.</title>
        <authorList>
            <person name="Liu W.-Q."/>
            <person name="Feng Y."/>
            <person name="Wang Y."/>
            <person name="Zou Q.-H."/>
            <person name="Chen F."/>
            <person name="Guo J.-T."/>
            <person name="Peng Y.-H."/>
            <person name="Jin Y."/>
            <person name="Li Y.-G."/>
            <person name="Hu S.-N."/>
            <person name="Johnston R.N."/>
            <person name="Liu G.-R."/>
            <person name="Liu S.-L."/>
        </authorList>
    </citation>
    <scope>NUCLEOTIDE SEQUENCE [LARGE SCALE GENOMIC DNA]</scope>
    <source>
        <strain>RKS4594</strain>
    </source>
</reference>
<comment type="function">
    <text evidence="1">Catalyzes the cleavage of 5-oxoproline to form L-glutamate coupled to the hydrolysis of ATP to ADP and inorganic phosphate.</text>
</comment>
<comment type="catalytic activity">
    <reaction evidence="1">
        <text>5-oxo-L-proline + ATP + 2 H2O = L-glutamate + ADP + phosphate + H(+)</text>
        <dbReference type="Rhea" id="RHEA:10348"/>
        <dbReference type="ChEBI" id="CHEBI:15377"/>
        <dbReference type="ChEBI" id="CHEBI:15378"/>
        <dbReference type="ChEBI" id="CHEBI:29985"/>
        <dbReference type="ChEBI" id="CHEBI:30616"/>
        <dbReference type="ChEBI" id="CHEBI:43474"/>
        <dbReference type="ChEBI" id="CHEBI:58402"/>
        <dbReference type="ChEBI" id="CHEBI:456216"/>
        <dbReference type="EC" id="3.5.2.9"/>
    </reaction>
</comment>
<comment type="subunit">
    <text evidence="1">Forms a complex composed of PxpA, PxpB and PxpC.</text>
</comment>
<comment type="similarity">
    <text evidence="1">Belongs to the LamB/PxpA family.</text>
</comment>
<sequence>MNIDLNADVGEGCASDSELLTLVSSANIACGFHAGDAQTMLTCVREALKNGVAFGAHPSFPDRDNFGRTAMVLPPETVYAQTLYQIGALGAIVQAQGGVMRHVKPHGMLYNQAAKDPHLAQAIAKAVHDYDPSLILVGLAGSELIRAGERHRLVTRQEVFADRGYQADGSLVPRMQPGALIHDEEQALAQTLDMVQAGRVKSVTGVWTTVTAQTVCIHGDGEYALAFARRLRAAFNARNIHVIA</sequence>
<dbReference type="EC" id="3.5.2.9" evidence="1"/>
<dbReference type="EMBL" id="CP000857">
    <property type="protein sequence ID" value="ACN44899.1"/>
    <property type="molecule type" value="Genomic_DNA"/>
</dbReference>
<dbReference type="RefSeq" id="WP_001017921.1">
    <property type="nucleotide sequence ID" value="NC_012125.1"/>
</dbReference>
<dbReference type="SMR" id="C0PWD6"/>
<dbReference type="KEGG" id="sei:SPC_0724"/>
<dbReference type="HOGENOM" id="CLU_069535_0_0_6"/>
<dbReference type="Proteomes" id="UP000001599">
    <property type="component" value="Chromosome"/>
</dbReference>
<dbReference type="GO" id="GO:0017168">
    <property type="term" value="F:5-oxoprolinase (ATP-hydrolyzing) activity"/>
    <property type="evidence" value="ECO:0007669"/>
    <property type="project" value="UniProtKB-UniRule"/>
</dbReference>
<dbReference type="GO" id="GO:0005524">
    <property type="term" value="F:ATP binding"/>
    <property type="evidence" value="ECO:0007669"/>
    <property type="project" value="UniProtKB-UniRule"/>
</dbReference>
<dbReference type="GO" id="GO:0005975">
    <property type="term" value="P:carbohydrate metabolic process"/>
    <property type="evidence" value="ECO:0007669"/>
    <property type="project" value="InterPro"/>
</dbReference>
<dbReference type="CDD" id="cd10800">
    <property type="entry name" value="LamB_YcsF_YbgL_like"/>
    <property type="match status" value="1"/>
</dbReference>
<dbReference type="Gene3D" id="3.20.20.370">
    <property type="entry name" value="Glycoside hydrolase/deacetylase"/>
    <property type="match status" value="1"/>
</dbReference>
<dbReference type="HAMAP" id="MF_00691">
    <property type="entry name" value="PxpA"/>
    <property type="match status" value="1"/>
</dbReference>
<dbReference type="InterPro" id="IPR011330">
    <property type="entry name" value="Glyco_hydro/deAcase_b/a-brl"/>
</dbReference>
<dbReference type="InterPro" id="IPR005501">
    <property type="entry name" value="LamB/YcsF/PxpA-like"/>
</dbReference>
<dbReference type="NCBIfam" id="NF003812">
    <property type="entry name" value="PRK05406.1-1"/>
    <property type="match status" value="1"/>
</dbReference>
<dbReference type="NCBIfam" id="NF003814">
    <property type="entry name" value="PRK05406.1-3"/>
    <property type="match status" value="1"/>
</dbReference>
<dbReference type="NCBIfam" id="NF003815">
    <property type="entry name" value="PRK05406.1-4"/>
    <property type="match status" value="1"/>
</dbReference>
<dbReference type="NCBIfam" id="NF003816">
    <property type="entry name" value="PRK05406.1-5"/>
    <property type="match status" value="1"/>
</dbReference>
<dbReference type="PANTHER" id="PTHR30292:SF0">
    <property type="entry name" value="5-OXOPROLINASE SUBUNIT A"/>
    <property type="match status" value="1"/>
</dbReference>
<dbReference type="PANTHER" id="PTHR30292">
    <property type="entry name" value="UNCHARACTERIZED PROTEIN YBGL-RELATED"/>
    <property type="match status" value="1"/>
</dbReference>
<dbReference type="Pfam" id="PF03746">
    <property type="entry name" value="LamB_YcsF"/>
    <property type="match status" value="1"/>
</dbReference>
<dbReference type="SUPFAM" id="SSF88713">
    <property type="entry name" value="Glycoside hydrolase/deacetylase"/>
    <property type="match status" value="1"/>
</dbReference>